<sequence length="343" mass="39070">MSHQTGIRANEQLAKVFGKAKNGKFRVIKVSIENEQLSCGATAETKKDWERDYDKLIGPLLEKDVPCYILYRLDAKIPLGYSWLLISWTPDTASIRQKMVYASTKATLKTEFGSAYITEELHATTLDECTLEGYRRHKQDFAAPAPLTSREEELKELRKTEVHTEINTNTRHQTLGGINCPLSEATVAAVQDLVRGKHDYLQFRIDLEEEQIHVSRAAKVELADLPKQVPEDHARYHLFLFRHTHEGDYFESYVFVYSMPGYSCSVRERMMYSSCKAPFLDELAALGVEVVKKLEIDSGSELTEAFLQDELHPKKILHRPAFAKPKGPPNRGAKRLTRPTAED</sequence>
<keyword id="KW-0009">Actin-binding</keyword>
<keyword id="KW-0963">Cytoplasm</keyword>
<keyword id="KW-0206">Cytoskeleton</keyword>
<keyword id="KW-1185">Reference proteome</keyword>
<keyword id="KW-0677">Repeat</keyword>
<organism>
    <name type="scientific">Drosophila melanogaster</name>
    <name type="common">Fruit fly</name>
    <dbReference type="NCBI Taxonomy" id="7227"/>
    <lineage>
        <taxon>Eukaryota</taxon>
        <taxon>Metazoa</taxon>
        <taxon>Ecdysozoa</taxon>
        <taxon>Arthropoda</taxon>
        <taxon>Hexapoda</taxon>
        <taxon>Insecta</taxon>
        <taxon>Pterygota</taxon>
        <taxon>Neoptera</taxon>
        <taxon>Endopterygota</taxon>
        <taxon>Diptera</taxon>
        <taxon>Brachycera</taxon>
        <taxon>Muscomorpha</taxon>
        <taxon>Ephydroidea</taxon>
        <taxon>Drosophilidae</taxon>
        <taxon>Drosophila</taxon>
        <taxon>Sophophora</taxon>
    </lineage>
</organism>
<dbReference type="EMBL" id="AJ430055">
    <property type="protein sequence ID" value="CAD22537.1"/>
    <property type="molecule type" value="mRNA"/>
</dbReference>
<dbReference type="EMBL" id="AE014297">
    <property type="protein sequence ID" value="AAF55022.1"/>
    <property type="molecule type" value="Genomic_DNA"/>
</dbReference>
<dbReference type="EMBL" id="AY069613">
    <property type="protein sequence ID" value="AAL39758.1"/>
    <property type="molecule type" value="mRNA"/>
</dbReference>
<dbReference type="RefSeq" id="NP_650338.1">
    <property type="nucleotide sequence ID" value="NM_142081.4"/>
</dbReference>
<dbReference type="SMR" id="Q9VFM9"/>
<dbReference type="BioGRID" id="66796">
    <property type="interactions" value="3"/>
</dbReference>
<dbReference type="FunCoup" id="Q9VFM9">
    <property type="interactions" value="1033"/>
</dbReference>
<dbReference type="IntAct" id="Q9VFM9">
    <property type="interactions" value="15"/>
</dbReference>
<dbReference type="STRING" id="7227.FBpp0082352"/>
<dbReference type="PaxDb" id="7227-FBpp0082352"/>
<dbReference type="DNASU" id="41719"/>
<dbReference type="EnsemblMetazoa" id="FBtr0082891">
    <property type="protein sequence ID" value="FBpp0082352"/>
    <property type="gene ID" value="FBgn0038206"/>
</dbReference>
<dbReference type="GeneID" id="41719"/>
<dbReference type="KEGG" id="dme:Dmel_CG3172"/>
<dbReference type="UCSC" id="CG3172-RA">
    <property type="organism name" value="d. melanogaster"/>
</dbReference>
<dbReference type="AGR" id="FB:FBgn0038206"/>
<dbReference type="CTD" id="41719"/>
<dbReference type="FlyBase" id="FBgn0038206">
    <property type="gene designation" value="twf"/>
</dbReference>
<dbReference type="VEuPathDB" id="VectorBase:FBgn0038206"/>
<dbReference type="eggNOG" id="KOG1747">
    <property type="taxonomic scope" value="Eukaryota"/>
</dbReference>
<dbReference type="GeneTree" id="ENSGT00530000063868"/>
<dbReference type="HOGENOM" id="CLU_031995_0_1_1"/>
<dbReference type="InParanoid" id="Q9VFM9"/>
<dbReference type="OMA" id="YLFKHTH"/>
<dbReference type="OrthoDB" id="10006997at2759"/>
<dbReference type="PhylomeDB" id="Q9VFM9"/>
<dbReference type="Reactome" id="R-DME-9013418">
    <property type="pathway name" value="RHOBTB2 GTPase cycle"/>
</dbReference>
<dbReference type="BioGRID-ORCS" id="41719">
    <property type="hits" value="0 hits in 3 CRISPR screens"/>
</dbReference>
<dbReference type="GenomeRNAi" id="41719"/>
<dbReference type="PRO" id="PR:Q9VFM9"/>
<dbReference type="Proteomes" id="UP000000803">
    <property type="component" value="Chromosome 3R"/>
</dbReference>
<dbReference type="Bgee" id="FBgn0038206">
    <property type="expression patterns" value="Expressed in embryonic/larval hemocyte (Drosophila) and 88 other cell types or tissues"/>
</dbReference>
<dbReference type="GO" id="GO:0005884">
    <property type="term" value="C:actin filament"/>
    <property type="evidence" value="ECO:0000318"/>
    <property type="project" value="GO_Central"/>
</dbReference>
<dbReference type="GO" id="GO:0005938">
    <property type="term" value="C:cell cortex"/>
    <property type="evidence" value="ECO:0007669"/>
    <property type="project" value="UniProtKB-SubCell"/>
</dbReference>
<dbReference type="GO" id="GO:0005737">
    <property type="term" value="C:cytoplasm"/>
    <property type="evidence" value="ECO:0000314"/>
    <property type="project" value="UniProtKB"/>
</dbReference>
<dbReference type="GO" id="GO:0030016">
    <property type="term" value="C:myofibril"/>
    <property type="evidence" value="ECO:0000318"/>
    <property type="project" value="GO_Central"/>
</dbReference>
<dbReference type="GO" id="GO:0005886">
    <property type="term" value="C:plasma membrane"/>
    <property type="evidence" value="ECO:0000314"/>
    <property type="project" value="UniProtKB"/>
</dbReference>
<dbReference type="GO" id="GO:0098793">
    <property type="term" value="C:presynapse"/>
    <property type="evidence" value="ECO:0007669"/>
    <property type="project" value="GOC"/>
</dbReference>
<dbReference type="GO" id="GO:0003779">
    <property type="term" value="F:actin binding"/>
    <property type="evidence" value="ECO:0000315"/>
    <property type="project" value="UniProtKB"/>
</dbReference>
<dbReference type="GO" id="GO:0051015">
    <property type="term" value="F:actin filament binding"/>
    <property type="evidence" value="ECO:0000318"/>
    <property type="project" value="GO_Central"/>
</dbReference>
<dbReference type="GO" id="GO:0003785">
    <property type="term" value="F:actin monomer binding"/>
    <property type="evidence" value="ECO:0000318"/>
    <property type="project" value="GO_Central"/>
</dbReference>
<dbReference type="GO" id="GO:0030042">
    <property type="term" value="P:actin filament depolymerization"/>
    <property type="evidence" value="ECO:0000314"/>
    <property type="project" value="FlyBase"/>
</dbReference>
<dbReference type="GO" id="GO:0051016">
    <property type="term" value="P:barbed-end actin filament capping"/>
    <property type="evidence" value="ECO:0000318"/>
    <property type="project" value="GO_Central"/>
</dbReference>
<dbReference type="GO" id="GO:0007298">
    <property type="term" value="P:border follicle cell migration"/>
    <property type="evidence" value="ECO:0000315"/>
    <property type="project" value="FlyBase"/>
</dbReference>
<dbReference type="GO" id="GO:0008407">
    <property type="term" value="P:chaeta morphogenesis"/>
    <property type="evidence" value="ECO:0000315"/>
    <property type="project" value="FlyBase"/>
</dbReference>
<dbReference type="GO" id="GO:0016319">
    <property type="term" value="P:mushroom body development"/>
    <property type="evidence" value="ECO:0000315"/>
    <property type="project" value="FlyBase"/>
</dbReference>
<dbReference type="GO" id="GO:0030837">
    <property type="term" value="P:negative regulation of actin filament polymerization"/>
    <property type="evidence" value="ECO:0000315"/>
    <property type="project" value="CACAO"/>
</dbReference>
<dbReference type="GO" id="GO:0007274">
    <property type="term" value="P:neuromuscular synaptic transmission"/>
    <property type="evidence" value="ECO:0000315"/>
    <property type="project" value="FlyBase"/>
</dbReference>
<dbReference type="GO" id="GO:0010976">
    <property type="term" value="P:positive regulation of neuron projection development"/>
    <property type="evidence" value="ECO:0000318"/>
    <property type="project" value="GO_Central"/>
</dbReference>
<dbReference type="GO" id="GO:0030833">
    <property type="term" value="P:regulation of actin filament polymerization"/>
    <property type="evidence" value="ECO:0000315"/>
    <property type="project" value="UniProtKB"/>
</dbReference>
<dbReference type="GO" id="GO:0010591">
    <property type="term" value="P:regulation of lamellipodium assembly"/>
    <property type="evidence" value="ECO:0000315"/>
    <property type="project" value="FlyBase"/>
</dbReference>
<dbReference type="GO" id="GO:0048488">
    <property type="term" value="P:synaptic vesicle endocytosis"/>
    <property type="evidence" value="ECO:0000315"/>
    <property type="project" value="FlyBase"/>
</dbReference>
<dbReference type="CDD" id="cd11284">
    <property type="entry name" value="ADF_Twf-C_like"/>
    <property type="match status" value="1"/>
</dbReference>
<dbReference type="CDD" id="cd11285">
    <property type="entry name" value="ADF_Twf-N_like"/>
    <property type="match status" value="1"/>
</dbReference>
<dbReference type="FunFam" id="3.40.20.10:FF:000042">
    <property type="entry name" value="Actin depolymerizing protein"/>
    <property type="match status" value="1"/>
</dbReference>
<dbReference type="FunFam" id="3.40.20.10:FF:000007">
    <property type="entry name" value="Twinfilin-1 isoform 1"/>
    <property type="match status" value="1"/>
</dbReference>
<dbReference type="Gene3D" id="3.40.20.10">
    <property type="entry name" value="Severin"/>
    <property type="match status" value="2"/>
</dbReference>
<dbReference type="InterPro" id="IPR002108">
    <property type="entry name" value="ADF-H"/>
</dbReference>
<dbReference type="InterPro" id="IPR029006">
    <property type="entry name" value="ADF-H/Gelsolin-like_dom_sf"/>
</dbReference>
<dbReference type="InterPro" id="IPR028458">
    <property type="entry name" value="Twinfilin"/>
</dbReference>
<dbReference type="PANTHER" id="PTHR13759">
    <property type="entry name" value="TWINFILIN"/>
    <property type="match status" value="1"/>
</dbReference>
<dbReference type="PANTHER" id="PTHR13759:SF1">
    <property type="entry name" value="TWINFILIN"/>
    <property type="match status" value="1"/>
</dbReference>
<dbReference type="Pfam" id="PF00241">
    <property type="entry name" value="Cofilin_ADF"/>
    <property type="match status" value="2"/>
</dbReference>
<dbReference type="SMART" id="SM00102">
    <property type="entry name" value="ADF"/>
    <property type="match status" value="2"/>
</dbReference>
<dbReference type="SUPFAM" id="SSF55753">
    <property type="entry name" value="Actin depolymerizing proteins"/>
    <property type="match status" value="2"/>
</dbReference>
<dbReference type="PROSITE" id="PS51263">
    <property type="entry name" value="ADF_H"/>
    <property type="match status" value="2"/>
</dbReference>
<protein>
    <recommendedName>
        <fullName>Twinfilin</fullName>
    </recommendedName>
</protein>
<accession>Q9VFM9</accession>
<name>TWF_DROME</name>
<comment type="function">
    <text evidence="3">Actin-binding protein involved in motile and morphological processes. Inhibits actin polymerization, likely by sequestering G-actin.</text>
</comment>
<comment type="subunit">
    <text evidence="3">Interacts with G-actin; ADP-actin form.</text>
</comment>
<comment type="subcellular location">
    <subcellularLocation>
        <location evidence="3">Cytoplasm</location>
        <location evidence="3">Cytoskeleton</location>
    </subcellularLocation>
    <subcellularLocation>
        <location evidence="3">Cytoplasm</location>
        <location evidence="3">Cell cortex</location>
    </subcellularLocation>
</comment>
<comment type="developmental stage">
    <text evidence="3">Maternally expressed. Ubiquitously expressed in embryos and throughout development.</text>
</comment>
<comment type="similarity">
    <text evidence="4">Belongs to the actin-binding proteins ADF family. Twinfilin subfamily.</text>
</comment>
<proteinExistence type="evidence at protein level"/>
<evidence type="ECO:0000255" key="1">
    <source>
        <dbReference type="PROSITE-ProRule" id="PRU00599"/>
    </source>
</evidence>
<evidence type="ECO:0000256" key="2">
    <source>
        <dbReference type="SAM" id="MobiDB-lite"/>
    </source>
</evidence>
<evidence type="ECO:0000269" key="3">
    <source>
    </source>
</evidence>
<evidence type="ECO:0000305" key="4"/>
<feature type="chain" id="PRO_0000308812" description="Twinfilin">
    <location>
        <begin position="1"/>
        <end position="343"/>
    </location>
</feature>
<feature type="domain" description="ADF-H 1" evidence="1">
    <location>
        <begin position="11"/>
        <end position="135"/>
    </location>
</feature>
<feature type="domain" description="ADF-H 2" evidence="1">
    <location>
        <begin position="184"/>
        <end position="312"/>
    </location>
</feature>
<feature type="region of interest" description="Disordered" evidence="2">
    <location>
        <begin position="319"/>
        <end position="343"/>
    </location>
</feature>
<gene>
    <name type="primary">twf</name>
    <name type="ORF">CG3172</name>
</gene>
<reference key="1">
    <citation type="journal article" date="2001" name="J. Cell Biol.">
        <title>Twinfilin is required for actin-dependent developmental processes in Drosophila.</title>
        <authorList>
            <person name="Wahlstroem G."/>
            <person name="Vartiainen M."/>
            <person name="Yamamoto L."/>
            <person name="Mattila P.K."/>
            <person name="Lappalainen P."/>
            <person name="Heino T.I."/>
        </authorList>
    </citation>
    <scope>NUCLEOTIDE SEQUENCE [MRNA]</scope>
    <scope>FUNCTION</scope>
    <scope>INTERACTION WITH ACTIN</scope>
    <scope>SUBCELLULAR LOCATION</scope>
    <scope>DEVELOPMENTAL STAGE</scope>
</reference>
<reference key="2">
    <citation type="journal article" date="2000" name="Science">
        <title>The genome sequence of Drosophila melanogaster.</title>
        <authorList>
            <person name="Adams M.D."/>
            <person name="Celniker S.E."/>
            <person name="Holt R.A."/>
            <person name="Evans C.A."/>
            <person name="Gocayne J.D."/>
            <person name="Amanatides P.G."/>
            <person name="Scherer S.E."/>
            <person name="Li P.W."/>
            <person name="Hoskins R.A."/>
            <person name="Galle R.F."/>
            <person name="George R.A."/>
            <person name="Lewis S.E."/>
            <person name="Richards S."/>
            <person name="Ashburner M."/>
            <person name="Henderson S.N."/>
            <person name="Sutton G.G."/>
            <person name="Wortman J.R."/>
            <person name="Yandell M.D."/>
            <person name="Zhang Q."/>
            <person name="Chen L.X."/>
            <person name="Brandon R.C."/>
            <person name="Rogers Y.-H.C."/>
            <person name="Blazej R.G."/>
            <person name="Champe M."/>
            <person name="Pfeiffer B.D."/>
            <person name="Wan K.H."/>
            <person name="Doyle C."/>
            <person name="Baxter E.G."/>
            <person name="Helt G."/>
            <person name="Nelson C.R."/>
            <person name="Miklos G.L.G."/>
            <person name="Abril J.F."/>
            <person name="Agbayani A."/>
            <person name="An H.-J."/>
            <person name="Andrews-Pfannkoch C."/>
            <person name="Baldwin D."/>
            <person name="Ballew R.M."/>
            <person name="Basu A."/>
            <person name="Baxendale J."/>
            <person name="Bayraktaroglu L."/>
            <person name="Beasley E.M."/>
            <person name="Beeson K.Y."/>
            <person name="Benos P.V."/>
            <person name="Berman B.P."/>
            <person name="Bhandari D."/>
            <person name="Bolshakov S."/>
            <person name="Borkova D."/>
            <person name="Botchan M.R."/>
            <person name="Bouck J."/>
            <person name="Brokstein P."/>
            <person name="Brottier P."/>
            <person name="Burtis K.C."/>
            <person name="Busam D.A."/>
            <person name="Butler H."/>
            <person name="Cadieu E."/>
            <person name="Center A."/>
            <person name="Chandra I."/>
            <person name="Cherry J.M."/>
            <person name="Cawley S."/>
            <person name="Dahlke C."/>
            <person name="Davenport L.B."/>
            <person name="Davies P."/>
            <person name="de Pablos B."/>
            <person name="Delcher A."/>
            <person name="Deng Z."/>
            <person name="Mays A.D."/>
            <person name="Dew I."/>
            <person name="Dietz S.M."/>
            <person name="Dodson K."/>
            <person name="Doup L.E."/>
            <person name="Downes M."/>
            <person name="Dugan-Rocha S."/>
            <person name="Dunkov B.C."/>
            <person name="Dunn P."/>
            <person name="Durbin K.J."/>
            <person name="Evangelista C.C."/>
            <person name="Ferraz C."/>
            <person name="Ferriera S."/>
            <person name="Fleischmann W."/>
            <person name="Fosler C."/>
            <person name="Gabrielian A.E."/>
            <person name="Garg N.S."/>
            <person name="Gelbart W.M."/>
            <person name="Glasser K."/>
            <person name="Glodek A."/>
            <person name="Gong F."/>
            <person name="Gorrell J.H."/>
            <person name="Gu Z."/>
            <person name="Guan P."/>
            <person name="Harris M."/>
            <person name="Harris N.L."/>
            <person name="Harvey D.A."/>
            <person name="Heiman T.J."/>
            <person name="Hernandez J.R."/>
            <person name="Houck J."/>
            <person name="Hostin D."/>
            <person name="Houston K.A."/>
            <person name="Howland T.J."/>
            <person name="Wei M.-H."/>
            <person name="Ibegwam C."/>
            <person name="Jalali M."/>
            <person name="Kalush F."/>
            <person name="Karpen G.H."/>
            <person name="Ke Z."/>
            <person name="Kennison J.A."/>
            <person name="Ketchum K.A."/>
            <person name="Kimmel B.E."/>
            <person name="Kodira C.D."/>
            <person name="Kraft C.L."/>
            <person name="Kravitz S."/>
            <person name="Kulp D."/>
            <person name="Lai Z."/>
            <person name="Lasko P."/>
            <person name="Lei Y."/>
            <person name="Levitsky A.A."/>
            <person name="Li J.H."/>
            <person name="Li Z."/>
            <person name="Liang Y."/>
            <person name="Lin X."/>
            <person name="Liu X."/>
            <person name="Mattei B."/>
            <person name="McIntosh T.C."/>
            <person name="McLeod M.P."/>
            <person name="McPherson D."/>
            <person name="Merkulov G."/>
            <person name="Milshina N.V."/>
            <person name="Mobarry C."/>
            <person name="Morris J."/>
            <person name="Moshrefi A."/>
            <person name="Mount S.M."/>
            <person name="Moy M."/>
            <person name="Murphy B."/>
            <person name="Murphy L."/>
            <person name="Muzny D.M."/>
            <person name="Nelson D.L."/>
            <person name="Nelson D.R."/>
            <person name="Nelson K.A."/>
            <person name="Nixon K."/>
            <person name="Nusskern D.R."/>
            <person name="Pacleb J.M."/>
            <person name="Palazzolo M."/>
            <person name="Pittman G.S."/>
            <person name="Pan S."/>
            <person name="Pollard J."/>
            <person name="Puri V."/>
            <person name="Reese M.G."/>
            <person name="Reinert K."/>
            <person name="Remington K."/>
            <person name="Saunders R.D.C."/>
            <person name="Scheeler F."/>
            <person name="Shen H."/>
            <person name="Shue B.C."/>
            <person name="Siden-Kiamos I."/>
            <person name="Simpson M."/>
            <person name="Skupski M.P."/>
            <person name="Smith T.J."/>
            <person name="Spier E."/>
            <person name="Spradling A.C."/>
            <person name="Stapleton M."/>
            <person name="Strong R."/>
            <person name="Sun E."/>
            <person name="Svirskas R."/>
            <person name="Tector C."/>
            <person name="Turner R."/>
            <person name="Venter E."/>
            <person name="Wang A.H."/>
            <person name="Wang X."/>
            <person name="Wang Z.-Y."/>
            <person name="Wassarman D.A."/>
            <person name="Weinstock G.M."/>
            <person name="Weissenbach J."/>
            <person name="Williams S.M."/>
            <person name="Woodage T."/>
            <person name="Worley K.C."/>
            <person name="Wu D."/>
            <person name="Yang S."/>
            <person name="Yao Q.A."/>
            <person name="Ye J."/>
            <person name="Yeh R.-F."/>
            <person name="Zaveri J.S."/>
            <person name="Zhan M."/>
            <person name="Zhang G."/>
            <person name="Zhao Q."/>
            <person name="Zheng L."/>
            <person name="Zheng X.H."/>
            <person name="Zhong F.N."/>
            <person name="Zhong W."/>
            <person name="Zhou X."/>
            <person name="Zhu S.C."/>
            <person name="Zhu X."/>
            <person name="Smith H.O."/>
            <person name="Gibbs R.A."/>
            <person name="Myers E.W."/>
            <person name="Rubin G.M."/>
            <person name="Venter J.C."/>
        </authorList>
    </citation>
    <scope>NUCLEOTIDE SEQUENCE [LARGE SCALE GENOMIC DNA]</scope>
    <source>
        <strain>Berkeley</strain>
    </source>
</reference>
<reference key="3">
    <citation type="journal article" date="2002" name="Genome Biol.">
        <title>Annotation of the Drosophila melanogaster euchromatic genome: a systematic review.</title>
        <authorList>
            <person name="Misra S."/>
            <person name="Crosby M.A."/>
            <person name="Mungall C.J."/>
            <person name="Matthews B.B."/>
            <person name="Campbell K.S."/>
            <person name="Hradecky P."/>
            <person name="Huang Y."/>
            <person name="Kaminker J.S."/>
            <person name="Millburn G.H."/>
            <person name="Prochnik S.E."/>
            <person name="Smith C.D."/>
            <person name="Tupy J.L."/>
            <person name="Whitfield E.J."/>
            <person name="Bayraktaroglu L."/>
            <person name="Berman B.P."/>
            <person name="Bettencourt B.R."/>
            <person name="Celniker S.E."/>
            <person name="de Grey A.D.N.J."/>
            <person name="Drysdale R.A."/>
            <person name="Harris N.L."/>
            <person name="Richter J."/>
            <person name="Russo S."/>
            <person name="Schroeder A.J."/>
            <person name="Shu S.Q."/>
            <person name="Stapleton M."/>
            <person name="Yamada C."/>
            <person name="Ashburner M."/>
            <person name="Gelbart W.M."/>
            <person name="Rubin G.M."/>
            <person name="Lewis S.E."/>
        </authorList>
    </citation>
    <scope>GENOME REANNOTATION</scope>
    <source>
        <strain>Berkeley</strain>
    </source>
</reference>
<reference key="4">
    <citation type="journal article" date="2002" name="Genome Biol.">
        <title>A Drosophila full-length cDNA resource.</title>
        <authorList>
            <person name="Stapleton M."/>
            <person name="Carlson J.W."/>
            <person name="Brokstein P."/>
            <person name="Yu C."/>
            <person name="Champe M."/>
            <person name="George R.A."/>
            <person name="Guarin H."/>
            <person name="Kronmiller B."/>
            <person name="Pacleb J.M."/>
            <person name="Park S."/>
            <person name="Wan K.H."/>
            <person name="Rubin G.M."/>
            <person name="Celniker S.E."/>
        </authorList>
    </citation>
    <scope>NUCLEOTIDE SEQUENCE [LARGE SCALE MRNA]</scope>
    <source>
        <strain>Berkeley</strain>
        <tissue>Embryo</tissue>
    </source>
</reference>